<comment type="function">
    <text evidence="1">Catalyzes the formation of N(4)-acetylcytidine (ac(4)C) at the wobble position of elongator tRNA(Met), using acetate and ATP as substrates. First activates an acetate ion to form acetyladenylate (Ac-AMP) and then transfers the acetyl group to tRNA to form ac(4)C34.</text>
</comment>
<comment type="catalytic activity">
    <reaction evidence="1">
        <text>cytidine(34) in elongator tRNA(Met) + acetate + ATP = N(4)-acetylcytidine(34) in elongator tRNA(Met) + AMP + diphosphate</text>
        <dbReference type="Rhea" id="RHEA:58144"/>
        <dbReference type="Rhea" id="RHEA-COMP:10693"/>
        <dbReference type="Rhea" id="RHEA-COMP:10694"/>
        <dbReference type="ChEBI" id="CHEBI:30089"/>
        <dbReference type="ChEBI" id="CHEBI:30616"/>
        <dbReference type="ChEBI" id="CHEBI:33019"/>
        <dbReference type="ChEBI" id="CHEBI:74900"/>
        <dbReference type="ChEBI" id="CHEBI:82748"/>
        <dbReference type="ChEBI" id="CHEBI:456215"/>
    </reaction>
</comment>
<comment type="subcellular location">
    <subcellularLocation>
        <location evidence="1">Cytoplasm</location>
    </subcellularLocation>
</comment>
<comment type="similarity">
    <text evidence="1">Belongs to the TmcAL family.</text>
</comment>
<dbReference type="EC" id="6.3.4.-" evidence="1"/>
<dbReference type="EMBL" id="AP006716">
    <property type="protein sequence ID" value="BAE05136.1"/>
    <property type="molecule type" value="Genomic_DNA"/>
</dbReference>
<dbReference type="RefSeq" id="WP_011276103.1">
    <property type="nucleotide sequence ID" value="NC_007168.1"/>
</dbReference>
<dbReference type="SMR" id="Q4L5D9"/>
<dbReference type="GeneID" id="93781195"/>
<dbReference type="KEGG" id="sha:SH1827"/>
<dbReference type="eggNOG" id="COG1323">
    <property type="taxonomic scope" value="Bacteria"/>
</dbReference>
<dbReference type="HOGENOM" id="CLU_038915_0_2_9"/>
<dbReference type="OrthoDB" id="9769796at2"/>
<dbReference type="Proteomes" id="UP000000543">
    <property type="component" value="Chromosome"/>
</dbReference>
<dbReference type="GO" id="GO:0005737">
    <property type="term" value="C:cytoplasm"/>
    <property type="evidence" value="ECO:0007669"/>
    <property type="project" value="UniProtKB-SubCell"/>
</dbReference>
<dbReference type="GO" id="GO:0005524">
    <property type="term" value="F:ATP binding"/>
    <property type="evidence" value="ECO:0007669"/>
    <property type="project" value="UniProtKB-KW"/>
</dbReference>
<dbReference type="GO" id="GO:0016879">
    <property type="term" value="F:ligase activity, forming carbon-nitrogen bonds"/>
    <property type="evidence" value="ECO:0007669"/>
    <property type="project" value="UniProtKB-UniRule"/>
</dbReference>
<dbReference type="GO" id="GO:0000049">
    <property type="term" value="F:tRNA binding"/>
    <property type="evidence" value="ECO:0007669"/>
    <property type="project" value="UniProtKB-KW"/>
</dbReference>
<dbReference type="GO" id="GO:0006400">
    <property type="term" value="P:tRNA modification"/>
    <property type="evidence" value="ECO:0007669"/>
    <property type="project" value="UniProtKB-UniRule"/>
</dbReference>
<dbReference type="Gene3D" id="3.40.50.620">
    <property type="entry name" value="HUPs"/>
    <property type="match status" value="1"/>
</dbReference>
<dbReference type="HAMAP" id="MF_01539">
    <property type="entry name" value="TmcAL"/>
    <property type="match status" value="1"/>
</dbReference>
<dbReference type="InterPro" id="IPR014729">
    <property type="entry name" value="Rossmann-like_a/b/a_fold"/>
</dbReference>
<dbReference type="InterPro" id="IPR008513">
    <property type="entry name" value="tRNA(Met)_cyd_acetate_ligase"/>
</dbReference>
<dbReference type="NCBIfam" id="NF010191">
    <property type="entry name" value="PRK13670.1"/>
    <property type="match status" value="1"/>
</dbReference>
<dbReference type="PANTHER" id="PTHR37825">
    <property type="entry name" value="TRNA(MET) CYTIDINE ACETATE LIGASE"/>
    <property type="match status" value="1"/>
</dbReference>
<dbReference type="PANTHER" id="PTHR37825:SF1">
    <property type="entry name" value="TRNA(MET) CYTIDINE ACETATE LIGASE"/>
    <property type="match status" value="1"/>
</dbReference>
<dbReference type="Pfam" id="PF05636">
    <property type="entry name" value="HIGH_NTase1"/>
    <property type="match status" value="1"/>
</dbReference>
<dbReference type="SUPFAM" id="SSF52374">
    <property type="entry name" value="Nucleotidylyl transferase"/>
    <property type="match status" value="1"/>
</dbReference>
<gene>
    <name evidence="1" type="primary">tmcAL</name>
    <name type="ordered locus">SH1827</name>
</gene>
<reference key="1">
    <citation type="journal article" date="2005" name="J. Bacteriol.">
        <title>Whole-genome sequencing of Staphylococcus haemolyticus uncovers the extreme plasticity of its genome and the evolution of human-colonizing staphylococcal species.</title>
        <authorList>
            <person name="Takeuchi F."/>
            <person name="Watanabe S."/>
            <person name="Baba T."/>
            <person name="Yuzawa H."/>
            <person name="Ito T."/>
            <person name="Morimoto Y."/>
            <person name="Kuroda M."/>
            <person name="Cui L."/>
            <person name="Takahashi M."/>
            <person name="Ankai A."/>
            <person name="Baba S."/>
            <person name="Fukui S."/>
            <person name="Lee J.C."/>
            <person name="Hiramatsu K."/>
        </authorList>
    </citation>
    <scope>NUCLEOTIDE SEQUENCE [LARGE SCALE GENOMIC DNA]</scope>
    <source>
        <strain>JCSC1435</strain>
    </source>
</reference>
<name>TMCAL_STAHJ</name>
<feature type="chain" id="PRO_0000300190" description="tRNA(Met) cytidine acetate ligase">
    <location>
        <begin position="1"/>
        <end position="380"/>
    </location>
</feature>
<feature type="binding site" evidence="1">
    <location>
        <begin position="7"/>
        <end position="20"/>
    </location>
    <ligand>
        <name>ATP</name>
        <dbReference type="ChEBI" id="CHEBI:30616"/>
    </ligand>
</feature>
<feature type="binding site" evidence="1">
    <location>
        <position position="100"/>
    </location>
    <ligand>
        <name>ATP</name>
        <dbReference type="ChEBI" id="CHEBI:30616"/>
    </ligand>
</feature>
<feature type="binding site" evidence="1">
    <location>
        <position position="153"/>
    </location>
    <ligand>
        <name>ATP</name>
        <dbReference type="ChEBI" id="CHEBI:30616"/>
    </ligand>
</feature>
<feature type="binding site" evidence="1">
    <location>
        <position position="178"/>
    </location>
    <ligand>
        <name>ATP</name>
        <dbReference type="ChEBI" id="CHEBI:30616"/>
    </ligand>
</feature>
<evidence type="ECO:0000255" key="1">
    <source>
        <dbReference type="HAMAP-Rule" id="MF_01539"/>
    </source>
</evidence>
<protein>
    <recommendedName>
        <fullName evidence="1">tRNA(Met) cytidine acetate ligase</fullName>
        <ecNumber evidence="1">6.3.4.-</ecNumber>
    </recommendedName>
</protein>
<proteinExistence type="inferred from homology"/>
<sequence>MKSVGLITEYNPFHNGHLYHAQQSKLQSDAEISIAIMSGNFVMRGEPAIYNKFLRTKMALSGVDLVVELPAIASLSSSDYFATFAIKVAHYLDIDTIAFGSEINDISRLENVASNINSLEQSSYFQDLIKQGNSYAKIVHDLIDDQQVLRSPNNILGVAYIKAISNIAPTIKRIAIQRQSTAHHDQEIKHDNFASGSAIRHALLNKENTWKDVVPADIKHLYETPHLLKKQTFNFIKYNILSRSSEELSHIYTMSEGFEHRLKSNIQNAQDFDTYMSLIKTKRFTYTHIQRVLMQILLNINKSDFDDEIRGVRILGMNQRGQQYLKYLKKQFPNRLYVTNINKESASLLKNEIKATHIYNLISGQRANDFNTPVIINKKN</sequence>
<organism>
    <name type="scientific">Staphylococcus haemolyticus (strain JCSC1435)</name>
    <dbReference type="NCBI Taxonomy" id="279808"/>
    <lineage>
        <taxon>Bacteria</taxon>
        <taxon>Bacillati</taxon>
        <taxon>Bacillota</taxon>
        <taxon>Bacilli</taxon>
        <taxon>Bacillales</taxon>
        <taxon>Staphylococcaceae</taxon>
        <taxon>Staphylococcus</taxon>
    </lineage>
</organism>
<accession>Q4L5D9</accession>
<keyword id="KW-0067">ATP-binding</keyword>
<keyword id="KW-0963">Cytoplasm</keyword>
<keyword id="KW-0436">Ligase</keyword>
<keyword id="KW-0547">Nucleotide-binding</keyword>
<keyword id="KW-0694">RNA-binding</keyword>
<keyword id="KW-0819">tRNA processing</keyword>
<keyword id="KW-0820">tRNA-binding</keyword>